<reference key="1">
    <citation type="journal article" date="2001" name="Science">
        <title>Comparative genomics of Listeria species.</title>
        <authorList>
            <person name="Glaser P."/>
            <person name="Frangeul L."/>
            <person name="Buchrieser C."/>
            <person name="Rusniok C."/>
            <person name="Amend A."/>
            <person name="Baquero F."/>
            <person name="Berche P."/>
            <person name="Bloecker H."/>
            <person name="Brandt P."/>
            <person name="Chakraborty T."/>
            <person name="Charbit A."/>
            <person name="Chetouani F."/>
            <person name="Couve E."/>
            <person name="de Daruvar A."/>
            <person name="Dehoux P."/>
            <person name="Domann E."/>
            <person name="Dominguez-Bernal G."/>
            <person name="Duchaud E."/>
            <person name="Durant L."/>
            <person name="Dussurget O."/>
            <person name="Entian K.-D."/>
            <person name="Fsihi H."/>
            <person name="Garcia-del Portillo F."/>
            <person name="Garrido P."/>
            <person name="Gautier L."/>
            <person name="Goebel W."/>
            <person name="Gomez-Lopez N."/>
            <person name="Hain T."/>
            <person name="Hauf J."/>
            <person name="Jackson D."/>
            <person name="Jones L.-M."/>
            <person name="Kaerst U."/>
            <person name="Kreft J."/>
            <person name="Kuhn M."/>
            <person name="Kunst F."/>
            <person name="Kurapkat G."/>
            <person name="Madueno E."/>
            <person name="Maitournam A."/>
            <person name="Mata Vicente J."/>
            <person name="Ng E."/>
            <person name="Nedjari H."/>
            <person name="Nordsiek G."/>
            <person name="Novella S."/>
            <person name="de Pablos B."/>
            <person name="Perez-Diaz J.-C."/>
            <person name="Purcell R."/>
            <person name="Remmel B."/>
            <person name="Rose M."/>
            <person name="Schlueter T."/>
            <person name="Simoes N."/>
            <person name="Tierrez A."/>
            <person name="Vazquez-Boland J.-A."/>
            <person name="Voss H."/>
            <person name="Wehland J."/>
            <person name="Cossart P."/>
        </authorList>
    </citation>
    <scope>NUCLEOTIDE SEQUENCE [LARGE SCALE GENOMIC DNA]</scope>
    <source>
        <strain>ATCC BAA-680 / CLIP 11262</strain>
    </source>
</reference>
<dbReference type="EC" id="2.5.1.6" evidence="1"/>
<dbReference type="EMBL" id="AL596169">
    <property type="protein sequence ID" value="CAC97004.1"/>
    <property type="molecule type" value="Genomic_DNA"/>
</dbReference>
<dbReference type="PIR" id="AD1654">
    <property type="entry name" value="AD1654"/>
</dbReference>
<dbReference type="RefSeq" id="WP_003762563.1">
    <property type="nucleotide sequence ID" value="NC_003212.1"/>
</dbReference>
<dbReference type="SMR" id="Q92AZ5"/>
<dbReference type="STRING" id="272626.gene:17566104"/>
<dbReference type="GeneID" id="93235086"/>
<dbReference type="KEGG" id="lin:metK"/>
<dbReference type="eggNOG" id="COG0192">
    <property type="taxonomic scope" value="Bacteria"/>
</dbReference>
<dbReference type="HOGENOM" id="CLU_041802_1_1_9"/>
<dbReference type="OrthoDB" id="9801686at2"/>
<dbReference type="UniPathway" id="UPA00315">
    <property type="reaction ID" value="UER00080"/>
</dbReference>
<dbReference type="Proteomes" id="UP000002513">
    <property type="component" value="Chromosome"/>
</dbReference>
<dbReference type="GO" id="GO:0005737">
    <property type="term" value="C:cytoplasm"/>
    <property type="evidence" value="ECO:0007669"/>
    <property type="project" value="UniProtKB-SubCell"/>
</dbReference>
<dbReference type="GO" id="GO:0005524">
    <property type="term" value="F:ATP binding"/>
    <property type="evidence" value="ECO:0007669"/>
    <property type="project" value="UniProtKB-UniRule"/>
</dbReference>
<dbReference type="GO" id="GO:0000287">
    <property type="term" value="F:magnesium ion binding"/>
    <property type="evidence" value="ECO:0007669"/>
    <property type="project" value="UniProtKB-UniRule"/>
</dbReference>
<dbReference type="GO" id="GO:0004478">
    <property type="term" value="F:methionine adenosyltransferase activity"/>
    <property type="evidence" value="ECO:0007669"/>
    <property type="project" value="UniProtKB-UniRule"/>
</dbReference>
<dbReference type="GO" id="GO:0006730">
    <property type="term" value="P:one-carbon metabolic process"/>
    <property type="evidence" value="ECO:0007669"/>
    <property type="project" value="UniProtKB-KW"/>
</dbReference>
<dbReference type="GO" id="GO:0006556">
    <property type="term" value="P:S-adenosylmethionine biosynthetic process"/>
    <property type="evidence" value="ECO:0007669"/>
    <property type="project" value="UniProtKB-UniRule"/>
</dbReference>
<dbReference type="CDD" id="cd18079">
    <property type="entry name" value="S-AdoMet_synt"/>
    <property type="match status" value="1"/>
</dbReference>
<dbReference type="FunFam" id="3.30.300.10:FF:000003">
    <property type="entry name" value="S-adenosylmethionine synthase"/>
    <property type="match status" value="1"/>
</dbReference>
<dbReference type="FunFam" id="3.30.300.10:FF:000004">
    <property type="entry name" value="S-adenosylmethionine synthase"/>
    <property type="match status" value="1"/>
</dbReference>
<dbReference type="Gene3D" id="3.30.300.10">
    <property type="match status" value="3"/>
</dbReference>
<dbReference type="HAMAP" id="MF_00086">
    <property type="entry name" value="S_AdoMet_synth1"/>
    <property type="match status" value="1"/>
</dbReference>
<dbReference type="InterPro" id="IPR022631">
    <property type="entry name" value="ADOMET_SYNTHASE_CS"/>
</dbReference>
<dbReference type="InterPro" id="IPR022630">
    <property type="entry name" value="S-AdoMet_synt_C"/>
</dbReference>
<dbReference type="InterPro" id="IPR022629">
    <property type="entry name" value="S-AdoMet_synt_central"/>
</dbReference>
<dbReference type="InterPro" id="IPR022628">
    <property type="entry name" value="S-AdoMet_synt_N"/>
</dbReference>
<dbReference type="InterPro" id="IPR002133">
    <property type="entry name" value="S-AdoMet_synthetase"/>
</dbReference>
<dbReference type="InterPro" id="IPR022636">
    <property type="entry name" value="S-AdoMet_synthetase_sfam"/>
</dbReference>
<dbReference type="NCBIfam" id="TIGR01034">
    <property type="entry name" value="metK"/>
    <property type="match status" value="1"/>
</dbReference>
<dbReference type="PANTHER" id="PTHR11964">
    <property type="entry name" value="S-ADENOSYLMETHIONINE SYNTHETASE"/>
    <property type="match status" value="1"/>
</dbReference>
<dbReference type="Pfam" id="PF02773">
    <property type="entry name" value="S-AdoMet_synt_C"/>
    <property type="match status" value="1"/>
</dbReference>
<dbReference type="Pfam" id="PF02772">
    <property type="entry name" value="S-AdoMet_synt_M"/>
    <property type="match status" value="1"/>
</dbReference>
<dbReference type="Pfam" id="PF00438">
    <property type="entry name" value="S-AdoMet_synt_N"/>
    <property type="match status" value="1"/>
</dbReference>
<dbReference type="PIRSF" id="PIRSF000497">
    <property type="entry name" value="MAT"/>
    <property type="match status" value="1"/>
</dbReference>
<dbReference type="SUPFAM" id="SSF55973">
    <property type="entry name" value="S-adenosylmethionine synthetase"/>
    <property type="match status" value="3"/>
</dbReference>
<dbReference type="PROSITE" id="PS00376">
    <property type="entry name" value="ADOMET_SYNTHASE_1"/>
    <property type="match status" value="1"/>
</dbReference>
<dbReference type="PROSITE" id="PS00377">
    <property type="entry name" value="ADOMET_SYNTHASE_2"/>
    <property type="match status" value="1"/>
</dbReference>
<gene>
    <name evidence="1" type="primary">metK</name>
    <name type="ordered locus">lin1773</name>
</gene>
<feature type="chain" id="PRO_0000174543" description="S-adenosylmethionine synthase">
    <location>
        <begin position="1"/>
        <end position="399"/>
    </location>
</feature>
<feature type="region of interest" description="Flexible loop" evidence="1">
    <location>
        <begin position="101"/>
        <end position="111"/>
    </location>
</feature>
<feature type="binding site" description="in other chain" evidence="1">
    <location>
        <position position="17"/>
    </location>
    <ligand>
        <name>ATP</name>
        <dbReference type="ChEBI" id="CHEBI:30616"/>
        <note>ligand shared between two neighboring subunits</note>
    </ligand>
</feature>
<feature type="binding site" evidence="1">
    <location>
        <position position="19"/>
    </location>
    <ligand>
        <name>Mg(2+)</name>
        <dbReference type="ChEBI" id="CHEBI:18420"/>
    </ligand>
</feature>
<feature type="binding site" evidence="1">
    <location>
        <position position="45"/>
    </location>
    <ligand>
        <name>K(+)</name>
        <dbReference type="ChEBI" id="CHEBI:29103"/>
    </ligand>
</feature>
<feature type="binding site" description="in other chain" evidence="1">
    <location>
        <position position="58"/>
    </location>
    <ligand>
        <name>L-methionine</name>
        <dbReference type="ChEBI" id="CHEBI:57844"/>
        <note>ligand shared between two neighboring subunits</note>
    </ligand>
</feature>
<feature type="binding site" description="in other chain" evidence="1">
    <location>
        <position position="101"/>
    </location>
    <ligand>
        <name>L-methionine</name>
        <dbReference type="ChEBI" id="CHEBI:57844"/>
        <note>ligand shared between two neighboring subunits</note>
    </ligand>
</feature>
<feature type="binding site" description="in other chain" evidence="1">
    <location>
        <begin position="177"/>
        <end position="179"/>
    </location>
    <ligand>
        <name>ATP</name>
        <dbReference type="ChEBI" id="CHEBI:30616"/>
        <note>ligand shared between two neighboring subunits</note>
    </ligand>
</feature>
<feature type="binding site" description="in other chain" evidence="1">
    <location>
        <begin position="244"/>
        <end position="245"/>
    </location>
    <ligand>
        <name>ATP</name>
        <dbReference type="ChEBI" id="CHEBI:30616"/>
        <note>ligand shared between two neighboring subunits</note>
    </ligand>
</feature>
<feature type="binding site" evidence="1">
    <location>
        <position position="253"/>
    </location>
    <ligand>
        <name>ATP</name>
        <dbReference type="ChEBI" id="CHEBI:30616"/>
        <note>ligand shared between two neighboring subunits</note>
    </ligand>
</feature>
<feature type="binding site" evidence="1">
    <location>
        <position position="253"/>
    </location>
    <ligand>
        <name>L-methionine</name>
        <dbReference type="ChEBI" id="CHEBI:57844"/>
        <note>ligand shared between two neighboring subunits</note>
    </ligand>
</feature>
<feature type="binding site" description="in other chain" evidence="1">
    <location>
        <begin position="259"/>
        <end position="260"/>
    </location>
    <ligand>
        <name>ATP</name>
        <dbReference type="ChEBI" id="CHEBI:30616"/>
        <note>ligand shared between two neighboring subunits</note>
    </ligand>
</feature>
<feature type="binding site" evidence="1">
    <location>
        <position position="276"/>
    </location>
    <ligand>
        <name>ATP</name>
        <dbReference type="ChEBI" id="CHEBI:30616"/>
        <note>ligand shared between two neighboring subunits</note>
    </ligand>
</feature>
<feature type="binding site" evidence="1">
    <location>
        <position position="280"/>
    </location>
    <ligand>
        <name>ATP</name>
        <dbReference type="ChEBI" id="CHEBI:30616"/>
        <note>ligand shared between two neighboring subunits</note>
    </ligand>
</feature>
<feature type="binding site" description="in other chain" evidence="1">
    <location>
        <position position="284"/>
    </location>
    <ligand>
        <name>L-methionine</name>
        <dbReference type="ChEBI" id="CHEBI:57844"/>
        <note>ligand shared between two neighboring subunits</note>
    </ligand>
</feature>
<evidence type="ECO:0000255" key="1">
    <source>
        <dbReference type="HAMAP-Rule" id="MF_00086"/>
    </source>
</evidence>
<proteinExistence type="inferred from homology"/>
<comment type="function">
    <text evidence="1">Catalyzes the formation of S-adenosylmethionine (AdoMet) from methionine and ATP. The overall synthetic reaction is composed of two sequential steps, AdoMet formation and the subsequent tripolyphosphate hydrolysis which occurs prior to release of AdoMet from the enzyme.</text>
</comment>
<comment type="catalytic activity">
    <reaction evidence="1">
        <text>L-methionine + ATP + H2O = S-adenosyl-L-methionine + phosphate + diphosphate</text>
        <dbReference type="Rhea" id="RHEA:21080"/>
        <dbReference type="ChEBI" id="CHEBI:15377"/>
        <dbReference type="ChEBI" id="CHEBI:30616"/>
        <dbReference type="ChEBI" id="CHEBI:33019"/>
        <dbReference type="ChEBI" id="CHEBI:43474"/>
        <dbReference type="ChEBI" id="CHEBI:57844"/>
        <dbReference type="ChEBI" id="CHEBI:59789"/>
        <dbReference type="EC" id="2.5.1.6"/>
    </reaction>
</comment>
<comment type="cofactor">
    <cofactor evidence="1">
        <name>Mg(2+)</name>
        <dbReference type="ChEBI" id="CHEBI:18420"/>
    </cofactor>
    <text evidence="1">Binds 2 divalent ions per subunit.</text>
</comment>
<comment type="cofactor">
    <cofactor evidence="1">
        <name>K(+)</name>
        <dbReference type="ChEBI" id="CHEBI:29103"/>
    </cofactor>
    <text evidence="1">Binds 1 potassium ion per subunit.</text>
</comment>
<comment type="pathway">
    <text evidence="1">Amino-acid biosynthesis; S-adenosyl-L-methionine biosynthesis; S-adenosyl-L-methionine from L-methionine: step 1/1.</text>
</comment>
<comment type="subunit">
    <text evidence="1">Homotetramer; dimer of dimers.</text>
</comment>
<comment type="subcellular location">
    <subcellularLocation>
        <location evidence="1">Cytoplasm</location>
    </subcellularLocation>
</comment>
<comment type="similarity">
    <text evidence="1">Belongs to the AdoMet synthase family.</text>
</comment>
<organism>
    <name type="scientific">Listeria innocua serovar 6a (strain ATCC BAA-680 / CLIP 11262)</name>
    <dbReference type="NCBI Taxonomy" id="272626"/>
    <lineage>
        <taxon>Bacteria</taxon>
        <taxon>Bacillati</taxon>
        <taxon>Bacillota</taxon>
        <taxon>Bacilli</taxon>
        <taxon>Bacillales</taxon>
        <taxon>Listeriaceae</taxon>
        <taxon>Listeria</taxon>
    </lineage>
</organism>
<protein>
    <recommendedName>
        <fullName evidence="1">S-adenosylmethionine synthase</fullName>
        <shortName evidence="1">AdoMet synthase</shortName>
        <ecNumber evidence="1">2.5.1.6</ecNumber>
    </recommendedName>
    <alternativeName>
        <fullName evidence="1">MAT</fullName>
    </alternativeName>
    <alternativeName>
        <fullName evidence="1">Methionine adenosyltransferase</fullName>
    </alternativeName>
</protein>
<sequence>MAKNRHLFTSESVSDGHPDKIADQISDAILDAIISKDPDARVACETTVTTGLVLVAGEITTSVYVDIPKIVRDTIKEIGYTRAKYGFDAETCAVLTAIDEQSPDIAQGVDEALESRSGSEIDAAIEAIGAGDQGLMFGFATDETEELMPLPIFLAHGLARKLTELRKTNKLDYLRPDAKTQVTVEYDEFNQPVRIDTIVVSTQHHPDITQEQIAKDLHTHLFPEVIDASFLDENTKYFINPTGRFVIGGPLGDAGLTGRKIIVDTYGGYARHGGGAFSGKDPTKVDRSGAYAARYVAKNIVAAGLAKKVEVQVAYAIGVARPVSISIDTYGTSDYSEQELIDGVNELFDLRPAGIIHMLDLRRPIYRQTAAFGHFGRSDLDLPWERTDKAEALKKLIVK</sequence>
<keyword id="KW-0067">ATP-binding</keyword>
<keyword id="KW-0963">Cytoplasm</keyword>
<keyword id="KW-0460">Magnesium</keyword>
<keyword id="KW-0479">Metal-binding</keyword>
<keyword id="KW-0547">Nucleotide-binding</keyword>
<keyword id="KW-0554">One-carbon metabolism</keyword>
<keyword id="KW-0630">Potassium</keyword>
<keyword id="KW-0808">Transferase</keyword>
<name>METK_LISIN</name>
<accession>Q92AZ5</accession>